<comment type="function">
    <text evidence="1 2 3">Destabilizes orange carotenoid protein-R form (OCP-R), the FRP-OCP interaction accelerates the OCP-R to OCP-O conversion (PubMed:20534537, PubMed:23716688). Increases fluorescence recovery following non-photochemical quenching (NPQ) by OCP, most probably by destabilizing OCP-R binding to the phycobilisome core (PubMed:21764991).</text>
</comment>
<comment type="subunit">
    <text evidence="1 3 6">Probably a dimer, interacts with the C-terminal domain of OCP-R (PubMed:23716688).</text>
</comment>
<comment type="interaction">
    <interactant intactId="EBI-1618115">
        <id>P74103</id>
    </interactant>
    <interactant intactId="EBI-1618104">
        <id>P74102</id>
        <label>slr1963</label>
    </interactant>
    <organismsDiffer>false</organismsDiffer>
    <experiments>2</experiments>
</comment>
<comment type="subcellular location">
    <subcellularLocation>
        <location evidence="1">Cellular thylakoid membrane</location>
        <topology evidence="1">Peripheral membrane protein</topology>
        <orientation evidence="5">Cytoplasmic side</orientation>
    </subcellularLocation>
    <text evidence="1">Very tightly associated with the membrane.</text>
</comment>
<comment type="induction">
    <text evidence="1">Transcribed from its own promoter, it may also be cotranscribed with upstream ocp.</text>
</comment>
<comment type="disruption phenotype">
    <text evidence="1">Decreased fluorescence recovery after non-photochemical quenching (NPQ).</text>
</comment>
<comment type="sequence caution" evidence="5">
    <conflict type="erroneous initiation">
        <sequence resource="EMBL-CDS" id="BAA18189"/>
    </conflict>
    <text>Extended N-terminus.</text>
</comment>
<gene>
    <name type="primary">frp</name>
    <name type="ordered locus">slr1964</name>
</gene>
<accession>P74103</accession>
<reference key="1">
    <citation type="journal article" date="1996" name="DNA Res.">
        <title>Sequence analysis of the genome of the unicellular cyanobacterium Synechocystis sp. strain PCC6803. II. Sequence determination of the entire genome and assignment of potential protein-coding regions.</title>
        <authorList>
            <person name="Kaneko T."/>
            <person name="Sato S."/>
            <person name="Kotani H."/>
            <person name="Tanaka A."/>
            <person name="Asamizu E."/>
            <person name="Nakamura Y."/>
            <person name="Miyajima N."/>
            <person name="Hirosawa M."/>
            <person name="Sugiura M."/>
            <person name="Sasamoto S."/>
            <person name="Kimura T."/>
            <person name="Hosouchi T."/>
            <person name="Matsuno A."/>
            <person name="Muraki A."/>
            <person name="Nakazaki N."/>
            <person name="Naruo K."/>
            <person name="Okumura S."/>
            <person name="Shimpo S."/>
            <person name="Takeuchi C."/>
            <person name="Wada T."/>
            <person name="Watanabe A."/>
            <person name="Yamada M."/>
            <person name="Yasuda M."/>
            <person name="Tabata S."/>
        </authorList>
    </citation>
    <scope>NUCLEOTIDE SEQUENCE [LARGE SCALE GENOMIC DNA]</scope>
    <source>
        <strain>ATCC 27184 / PCC 6803 / Kazusa</strain>
    </source>
</reference>
<reference key="2">
    <citation type="journal article" date="2010" name="Proc. Natl. Acad. Sci. U.S.A.">
        <title>Identification of a protein required for recovery of full antenna capacity in OCP-related photoprotective mechanism in cyanobacteria.</title>
        <authorList>
            <person name="Boulay C."/>
            <person name="Wilson A."/>
            <person name="D'Haene S."/>
            <person name="Kirilovsky D."/>
        </authorList>
    </citation>
    <scope>FUNCTION</scope>
    <scope>INTERACTION WITH OCP</scope>
    <scope>SUBUNIT</scope>
    <scope>SUBCELLULAR LOCATION</scope>
    <scope>INDUCTION</scope>
    <scope>DISRUPTION PHENOTYPE</scope>
    <source>
        <strain>ATCC 27184 / PCC 6803 / Kazusa</strain>
    </source>
</reference>
<reference key="3">
    <citation type="journal article" date="2011" name="Plant Cell">
        <title>In vitro reconstitution of the cyanobacterial photoprotective mechanism mediated by the orange carotenoid protein in Synechocystis PCC 6803.</title>
        <authorList>
            <person name="Gwizdala M."/>
            <person name="Wilson A."/>
            <person name="Kirilovsky D."/>
        </authorList>
    </citation>
    <scope>FUNCTION</scope>
    <scope>SUBUNIT</scope>
    <source>
        <strain>ATCC 27184 / PCC 6803 / Kazusa</strain>
    </source>
</reference>
<reference key="4">
    <citation type="journal article" date="2013" name="Proc. Natl. Acad. Sci. U.S.A.">
        <title>Crystal structure of the FRP and identification of the active site for modulation of OCP-mediated photoprotection in cyanobacteria.</title>
        <authorList>
            <person name="Sutter M."/>
            <person name="Wilson A."/>
            <person name="Leverenz R.L."/>
            <person name="Lopez-Igual R."/>
            <person name="Thurotte A."/>
            <person name="Salmeen A.E."/>
            <person name="Kirilovsky D."/>
            <person name="Kerfeld C.A."/>
        </authorList>
    </citation>
    <scope>X-RAY CRYSTALLOGRAPHY (2.50 ANGSTROMS) OF 2-109</scope>
    <scope>FUNCTION</scope>
    <scope>INTERACTION WITH OCP</scope>
    <scope>SUBUNIT</scope>
    <scope>MUTAGENESIS OF TRP-9; TRP-50; HIS-53; ASP-54 AND ARG-60</scope>
    <source>
        <strain>ATCC 27184 / PCC 6803 / Kazusa</strain>
    </source>
</reference>
<proteinExistence type="evidence at protein level"/>
<sequence>MLQTAEAPWSQAETQSAHALFRKAYQRELDGLLATVQAQASQITQIDDLWKLHDFLSAKRHEIDGKYDDRQSVIIFVFAQLLKEGLVQAEELTFLAADKQSKIKALARL</sequence>
<feature type="chain" id="PRO_0000434475" description="Fluorescence recovery protein">
    <location>
        <begin position="1"/>
        <end position="109"/>
    </location>
</feature>
<feature type="mutagenesis site" description="Wild-type role in conversion of OCP-R to OCP-O." evidence="3">
    <original>W</original>
    <variation>L</variation>
    <location>
        <position position="9"/>
    </location>
</feature>
<feature type="mutagenesis site" description="About 75% conversion of OCP-R to OCP-O." evidence="3">
    <original>W</original>
    <variation>F</variation>
    <location>
        <position position="50"/>
    </location>
</feature>
<feature type="mutagenesis site" description="About 25% conversion of OCP-R to OCP-O." evidence="3">
    <original>W</original>
    <variation>L</variation>
    <location>
        <position position="50"/>
    </location>
</feature>
<feature type="mutagenesis site" description="About 50% conversion of OCP-R to OCP-O." evidence="3">
    <original>H</original>
    <variation>L</variation>
    <location>
        <position position="53"/>
    </location>
</feature>
<feature type="mutagenesis site" description="About 75% conversion of OCP-R to OCP-O." evidence="3">
    <original>D</original>
    <variation>E</variation>
    <location>
        <position position="54"/>
    </location>
</feature>
<feature type="mutagenesis site" description="About 25% conversion of OCP-R to OCP-O." evidence="3">
    <original>D</original>
    <variation>L</variation>
    <location>
        <position position="54"/>
    </location>
</feature>
<feature type="mutagenesis site" description="Almost no conversion of OCP-R to OCP-O." evidence="3">
    <original>R</original>
    <variation>K</variation>
    <variation>L</variation>
    <location>
        <position position="60"/>
    </location>
</feature>
<feature type="helix" evidence="8">
    <location>
        <begin position="11"/>
        <end position="41"/>
    </location>
</feature>
<feature type="helix" evidence="8">
    <location>
        <begin position="47"/>
        <end position="64"/>
    </location>
</feature>
<feature type="turn" evidence="8">
    <location>
        <begin position="71"/>
        <end position="73"/>
    </location>
</feature>
<feature type="helix" evidence="8">
    <location>
        <begin position="74"/>
        <end position="83"/>
    </location>
</feature>
<feature type="helix" evidence="8">
    <location>
        <begin position="89"/>
        <end position="92"/>
    </location>
</feature>
<feature type="helix" evidence="8">
    <location>
        <begin position="97"/>
        <end position="108"/>
    </location>
</feature>
<name>FRP_SYNY3</name>
<organism evidence="7">
    <name type="scientific">Synechocystis sp. (strain ATCC 27184 / PCC 6803 / Kazusa)</name>
    <dbReference type="NCBI Taxonomy" id="1111708"/>
    <lineage>
        <taxon>Bacteria</taxon>
        <taxon>Bacillati</taxon>
        <taxon>Cyanobacteriota</taxon>
        <taxon>Cyanophyceae</taxon>
        <taxon>Synechococcales</taxon>
        <taxon>Merismopediaceae</taxon>
        <taxon>Synechocystis</taxon>
    </lineage>
</organism>
<keyword id="KW-0002">3D-structure</keyword>
<keyword id="KW-0472">Membrane</keyword>
<keyword id="KW-1185">Reference proteome</keyword>
<keyword id="KW-0793">Thylakoid</keyword>
<dbReference type="EMBL" id="BA000022">
    <property type="protein sequence ID" value="BAA18189.1"/>
    <property type="status" value="ALT_INIT"/>
    <property type="molecule type" value="Genomic_DNA"/>
</dbReference>
<dbReference type="PIR" id="S75628">
    <property type="entry name" value="S75628"/>
</dbReference>
<dbReference type="PDB" id="4JDQ">
    <property type="method" value="X-ray"/>
    <property type="resolution" value="3.52 A"/>
    <property type="chains" value="A/B/C/D/E/F=2-109"/>
</dbReference>
<dbReference type="PDB" id="4JDX">
    <property type="method" value="X-ray"/>
    <property type="resolution" value="2.50 A"/>
    <property type="chains" value="A/B/C/D/E/F=2-109"/>
</dbReference>
<dbReference type="PDBsum" id="4JDQ"/>
<dbReference type="PDBsum" id="4JDX"/>
<dbReference type="SASBDB" id="P74103"/>
<dbReference type="SMR" id="P74103"/>
<dbReference type="DIP" id="DIP-59344N"/>
<dbReference type="IntAct" id="P74103">
    <property type="interactions" value="3"/>
</dbReference>
<dbReference type="STRING" id="1148.gene:10499062"/>
<dbReference type="PaxDb" id="1148-1653274"/>
<dbReference type="EnsemblBacteria" id="BAA18189">
    <property type="protein sequence ID" value="BAA18189"/>
    <property type="gene ID" value="BAA18189"/>
</dbReference>
<dbReference type="KEGG" id="syn:slr1964"/>
<dbReference type="eggNOG" id="ENOG5032S2M">
    <property type="taxonomic scope" value="Bacteria"/>
</dbReference>
<dbReference type="InParanoid" id="P74103"/>
<dbReference type="EvolutionaryTrace" id="P74103"/>
<dbReference type="Proteomes" id="UP000001425">
    <property type="component" value="Chromosome"/>
</dbReference>
<dbReference type="GO" id="GO:0031676">
    <property type="term" value="C:plasma membrane-derived thylakoid membrane"/>
    <property type="evidence" value="ECO:0007669"/>
    <property type="project" value="UniProtKB-SubCell"/>
</dbReference>
<dbReference type="Gene3D" id="6.10.140.1840">
    <property type="match status" value="1"/>
</dbReference>
<dbReference type="InterPro" id="IPR053747">
    <property type="entry name" value="Fluoresc_Recovery_Reg"/>
</dbReference>
<dbReference type="InterPro" id="IPR041601">
    <property type="entry name" value="FRP"/>
</dbReference>
<dbReference type="Pfam" id="PF18032">
    <property type="entry name" value="FRP"/>
    <property type="match status" value="1"/>
</dbReference>
<protein>
    <recommendedName>
        <fullName evidence="4">Fluorescence recovery protein</fullName>
        <shortName evidence="4">FRP</shortName>
    </recommendedName>
</protein>
<evidence type="ECO:0000269" key="1">
    <source>
    </source>
</evidence>
<evidence type="ECO:0000269" key="2">
    <source>
    </source>
</evidence>
<evidence type="ECO:0000269" key="3">
    <source>
    </source>
</evidence>
<evidence type="ECO:0000303" key="4">
    <source>
    </source>
</evidence>
<evidence type="ECO:0000305" key="5">
    <source>
    </source>
</evidence>
<evidence type="ECO:0000305" key="6">
    <source>
    </source>
</evidence>
<evidence type="ECO:0000312" key="7">
    <source>
        <dbReference type="Proteomes" id="UP000001425"/>
    </source>
</evidence>
<evidence type="ECO:0007829" key="8">
    <source>
        <dbReference type="PDB" id="4JDX"/>
    </source>
</evidence>